<dbReference type="EMBL" id="CP001291">
    <property type="protein sequence ID" value="ACK72097.1"/>
    <property type="molecule type" value="Genomic_DNA"/>
</dbReference>
<dbReference type="RefSeq" id="WP_015955690.1">
    <property type="nucleotide sequence ID" value="NC_011729.1"/>
</dbReference>
<dbReference type="SMR" id="B7KI00"/>
<dbReference type="STRING" id="65393.PCC7424_3716"/>
<dbReference type="KEGG" id="cyc:PCC7424_3716"/>
<dbReference type="eggNOG" id="COG0096">
    <property type="taxonomic scope" value="Bacteria"/>
</dbReference>
<dbReference type="HOGENOM" id="CLU_098428_0_2_3"/>
<dbReference type="OrthoDB" id="9802617at2"/>
<dbReference type="Proteomes" id="UP000002384">
    <property type="component" value="Chromosome"/>
</dbReference>
<dbReference type="GO" id="GO:1990904">
    <property type="term" value="C:ribonucleoprotein complex"/>
    <property type="evidence" value="ECO:0007669"/>
    <property type="project" value="UniProtKB-KW"/>
</dbReference>
<dbReference type="GO" id="GO:0005840">
    <property type="term" value="C:ribosome"/>
    <property type="evidence" value="ECO:0007669"/>
    <property type="project" value="UniProtKB-KW"/>
</dbReference>
<dbReference type="GO" id="GO:0019843">
    <property type="term" value="F:rRNA binding"/>
    <property type="evidence" value="ECO:0007669"/>
    <property type="project" value="UniProtKB-UniRule"/>
</dbReference>
<dbReference type="GO" id="GO:0003735">
    <property type="term" value="F:structural constituent of ribosome"/>
    <property type="evidence" value="ECO:0007669"/>
    <property type="project" value="InterPro"/>
</dbReference>
<dbReference type="GO" id="GO:0006412">
    <property type="term" value="P:translation"/>
    <property type="evidence" value="ECO:0007669"/>
    <property type="project" value="UniProtKB-UniRule"/>
</dbReference>
<dbReference type="FunFam" id="3.30.1370.30:FF:000002">
    <property type="entry name" value="30S ribosomal protein S8"/>
    <property type="match status" value="1"/>
</dbReference>
<dbReference type="FunFam" id="3.30.1490.10:FF:000001">
    <property type="entry name" value="30S ribosomal protein S8"/>
    <property type="match status" value="1"/>
</dbReference>
<dbReference type="Gene3D" id="3.30.1370.30">
    <property type="match status" value="1"/>
</dbReference>
<dbReference type="Gene3D" id="3.30.1490.10">
    <property type="match status" value="1"/>
</dbReference>
<dbReference type="HAMAP" id="MF_01302_B">
    <property type="entry name" value="Ribosomal_uS8_B"/>
    <property type="match status" value="1"/>
</dbReference>
<dbReference type="InterPro" id="IPR000630">
    <property type="entry name" value="Ribosomal_uS8"/>
</dbReference>
<dbReference type="InterPro" id="IPR047863">
    <property type="entry name" value="Ribosomal_uS8_CS"/>
</dbReference>
<dbReference type="InterPro" id="IPR035987">
    <property type="entry name" value="Ribosomal_uS8_sf"/>
</dbReference>
<dbReference type="NCBIfam" id="NF001109">
    <property type="entry name" value="PRK00136.1"/>
    <property type="match status" value="1"/>
</dbReference>
<dbReference type="PANTHER" id="PTHR11758">
    <property type="entry name" value="40S RIBOSOMAL PROTEIN S15A"/>
    <property type="match status" value="1"/>
</dbReference>
<dbReference type="Pfam" id="PF00410">
    <property type="entry name" value="Ribosomal_S8"/>
    <property type="match status" value="1"/>
</dbReference>
<dbReference type="SUPFAM" id="SSF56047">
    <property type="entry name" value="Ribosomal protein S8"/>
    <property type="match status" value="1"/>
</dbReference>
<dbReference type="PROSITE" id="PS00053">
    <property type="entry name" value="RIBOSOMAL_S8"/>
    <property type="match status" value="1"/>
</dbReference>
<sequence>MASNDTIADMLTRIRNACAVRHPTTKVPTTKMTRSIAQVLKQEGFIEDFSEAGEGVGKHLVISLKYKGKTRQPIITTLKRVSKPGLRVYSPCKDLPRVLGGIGIAIVSTSQGIMTDREARRQGVGGEVLCYIW</sequence>
<keyword id="KW-1185">Reference proteome</keyword>
<keyword id="KW-0687">Ribonucleoprotein</keyword>
<keyword id="KW-0689">Ribosomal protein</keyword>
<keyword id="KW-0694">RNA-binding</keyword>
<keyword id="KW-0699">rRNA-binding</keyword>
<proteinExistence type="inferred from homology"/>
<accession>B7KI00</accession>
<feature type="chain" id="PRO_1000140541" description="Small ribosomal subunit protein uS8">
    <location>
        <begin position="1"/>
        <end position="133"/>
    </location>
</feature>
<gene>
    <name evidence="1" type="primary">rpsH</name>
    <name evidence="1" type="synonym">rps8</name>
    <name type="ordered locus">PCC7424_3716</name>
</gene>
<comment type="function">
    <text evidence="1">One of the primary rRNA binding proteins, it binds directly to 16S rRNA central domain where it helps coordinate assembly of the platform of the 30S subunit.</text>
</comment>
<comment type="subunit">
    <text evidence="1">Part of the 30S ribosomal subunit. Contacts proteins S5 and S12.</text>
</comment>
<comment type="similarity">
    <text evidence="1">Belongs to the universal ribosomal protein uS8 family.</text>
</comment>
<protein>
    <recommendedName>
        <fullName evidence="1">Small ribosomal subunit protein uS8</fullName>
    </recommendedName>
    <alternativeName>
        <fullName evidence="2">30S ribosomal protein S8</fullName>
    </alternativeName>
</protein>
<name>RS8_GLOC7</name>
<evidence type="ECO:0000255" key="1">
    <source>
        <dbReference type="HAMAP-Rule" id="MF_01302"/>
    </source>
</evidence>
<evidence type="ECO:0000305" key="2"/>
<organism>
    <name type="scientific">Gloeothece citriformis (strain PCC 7424)</name>
    <name type="common">Cyanothece sp. (strain PCC 7424)</name>
    <dbReference type="NCBI Taxonomy" id="65393"/>
    <lineage>
        <taxon>Bacteria</taxon>
        <taxon>Bacillati</taxon>
        <taxon>Cyanobacteriota</taxon>
        <taxon>Cyanophyceae</taxon>
        <taxon>Oscillatoriophycideae</taxon>
        <taxon>Chroococcales</taxon>
        <taxon>Aphanothecaceae</taxon>
        <taxon>Gloeothece</taxon>
        <taxon>Gloeothece citriformis</taxon>
    </lineage>
</organism>
<reference key="1">
    <citation type="journal article" date="2011" name="MBio">
        <title>Novel metabolic attributes of the genus Cyanothece, comprising a group of unicellular nitrogen-fixing Cyanobacteria.</title>
        <authorList>
            <person name="Bandyopadhyay A."/>
            <person name="Elvitigala T."/>
            <person name="Welsh E."/>
            <person name="Stockel J."/>
            <person name="Liberton M."/>
            <person name="Min H."/>
            <person name="Sherman L.A."/>
            <person name="Pakrasi H.B."/>
        </authorList>
    </citation>
    <scope>NUCLEOTIDE SEQUENCE [LARGE SCALE GENOMIC DNA]</scope>
    <source>
        <strain>PCC 7424</strain>
    </source>
</reference>